<protein>
    <recommendedName>
        <fullName evidence="1">Photosystem II reaction center protein J</fullName>
        <shortName evidence="1">PSII-J</shortName>
    </recommendedName>
</protein>
<geneLocation type="chloroplast"/>
<organism>
    <name type="scientific">Panax ginseng</name>
    <name type="common">Korean ginseng</name>
    <dbReference type="NCBI Taxonomy" id="4054"/>
    <lineage>
        <taxon>Eukaryota</taxon>
        <taxon>Viridiplantae</taxon>
        <taxon>Streptophyta</taxon>
        <taxon>Embryophyta</taxon>
        <taxon>Tracheophyta</taxon>
        <taxon>Spermatophyta</taxon>
        <taxon>Magnoliopsida</taxon>
        <taxon>eudicotyledons</taxon>
        <taxon>Gunneridae</taxon>
        <taxon>Pentapetalae</taxon>
        <taxon>asterids</taxon>
        <taxon>campanulids</taxon>
        <taxon>Apiales</taxon>
        <taxon>Araliaceae</taxon>
        <taxon>Panax</taxon>
    </lineage>
</organism>
<evidence type="ECO:0000255" key="1">
    <source>
        <dbReference type="HAMAP-Rule" id="MF_01305"/>
    </source>
</evidence>
<proteinExistence type="inferred from homology"/>
<keyword id="KW-0150">Chloroplast</keyword>
<keyword id="KW-0472">Membrane</keyword>
<keyword id="KW-0602">Photosynthesis</keyword>
<keyword id="KW-0604">Photosystem II</keyword>
<keyword id="KW-0934">Plastid</keyword>
<keyword id="KW-0674">Reaction center</keyword>
<keyword id="KW-0793">Thylakoid</keyword>
<keyword id="KW-0812">Transmembrane</keyword>
<keyword id="KW-1133">Transmembrane helix</keyword>
<accession>Q68RZ2</accession>
<gene>
    <name evidence="1" type="primary">psbJ</name>
    <name type="ORF">PSC0659</name>
</gene>
<reference key="1">
    <citation type="journal article" date="2004" name="DNA Res.">
        <title>Complete chloroplast genome sequence from Korea ginseng (Panax schinseng Nees) and comparative analysis of sequence evolution among 17 vascular plants.</title>
        <authorList>
            <person name="Kim K.-J."/>
            <person name="Lee H.-L."/>
        </authorList>
    </citation>
    <scope>NUCLEOTIDE SEQUENCE [LARGE SCALE GENOMIC DNA]</scope>
</reference>
<dbReference type="EMBL" id="AY582139">
    <property type="protein sequence ID" value="AAT98523.1"/>
    <property type="molecule type" value="Genomic_DNA"/>
</dbReference>
<dbReference type="RefSeq" id="YP_086980.1">
    <property type="nucleotide sequence ID" value="NC_006290.1"/>
</dbReference>
<dbReference type="SMR" id="Q68RZ2"/>
<dbReference type="GeneID" id="3021518"/>
<dbReference type="GO" id="GO:0009535">
    <property type="term" value="C:chloroplast thylakoid membrane"/>
    <property type="evidence" value="ECO:0007669"/>
    <property type="project" value="UniProtKB-SubCell"/>
</dbReference>
<dbReference type="GO" id="GO:0009539">
    <property type="term" value="C:photosystem II reaction center"/>
    <property type="evidence" value="ECO:0007669"/>
    <property type="project" value="InterPro"/>
</dbReference>
<dbReference type="GO" id="GO:0015979">
    <property type="term" value="P:photosynthesis"/>
    <property type="evidence" value="ECO:0007669"/>
    <property type="project" value="UniProtKB-UniRule"/>
</dbReference>
<dbReference type="Gene3D" id="6.10.250.2070">
    <property type="match status" value="1"/>
</dbReference>
<dbReference type="HAMAP" id="MF_01305">
    <property type="entry name" value="PSII_PsbJ"/>
    <property type="match status" value="1"/>
</dbReference>
<dbReference type="InterPro" id="IPR002682">
    <property type="entry name" value="PSII_PsbJ"/>
</dbReference>
<dbReference type="InterPro" id="IPR037267">
    <property type="entry name" value="PSII_PsbJ_sf"/>
</dbReference>
<dbReference type="NCBIfam" id="NF002722">
    <property type="entry name" value="PRK02565.1"/>
    <property type="match status" value="1"/>
</dbReference>
<dbReference type="PANTHER" id="PTHR34812">
    <property type="entry name" value="PHOTOSYSTEM II REACTION CENTER PROTEIN J"/>
    <property type="match status" value="1"/>
</dbReference>
<dbReference type="PANTHER" id="PTHR34812:SF3">
    <property type="entry name" value="PHOTOSYSTEM II REACTION CENTER PROTEIN J"/>
    <property type="match status" value="1"/>
</dbReference>
<dbReference type="Pfam" id="PF01788">
    <property type="entry name" value="PsbJ"/>
    <property type="match status" value="1"/>
</dbReference>
<dbReference type="SUPFAM" id="SSF161021">
    <property type="entry name" value="Photosystem II reaction center protein J, PsbJ"/>
    <property type="match status" value="1"/>
</dbReference>
<comment type="function">
    <text evidence="1">One of the components of the core complex of photosystem II (PSII). PSII is a light-driven water:plastoquinone oxidoreductase that uses light energy to abstract electrons from H(2)O, generating O(2) and a proton gradient subsequently used for ATP formation. It consists of a core antenna complex that captures photons, and an electron transfer chain that converts photonic excitation into a charge separation.</text>
</comment>
<comment type="subunit">
    <text evidence="1">PSII is composed of 1 copy each of membrane proteins PsbA, PsbB, PsbC, PsbD, PsbE, PsbF, PsbH, PsbI, PsbJ, PsbK, PsbL, PsbM, PsbT, PsbX, PsbY, PsbZ, Psb30/Ycf12, at least 3 peripheral proteins of the oxygen-evolving complex and a large number of cofactors. It forms dimeric complexes.</text>
</comment>
<comment type="subcellular location">
    <subcellularLocation>
        <location evidence="1">Plastid</location>
        <location evidence="1">Chloroplast thylakoid membrane</location>
        <topology evidence="1">Single-pass membrane protein</topology>
    </subcellularLocation>
</comment>
<comment type="similarity">
    <text evidence="1">Belongs to the PsbJ family.</text>
</comment>
<feature type="chain" id="PRO_0000216608" description="Photosystem II reaction center protein J">
    <location>
        <begin position="1"/>
        <end position="40"/>
    </location>
</feature>
<feature type="transmembrane region" description="Helical" evidence="1">
    <location>
        <begin position="8"/>
        <end position="28"/>
    </location>
</feature>
<name>PSBJ_PANGI</name>
<sequence length="40" mass="4131">MADTTGRIPLWIIGTVAGILVIGLIGIFFYGSYSGLGSSL</sequence>